<feature type="signal peptide" evidence="1">
    <location>
        <begin position="1"/>
        <end position="19"/>
    </location>
</feature>
<feature type="chain" id="PRO_0000024500" description="Protein TraF">
    <location>
        <begin position="20"/>
        <end position="247"/>
    </location>
</feature>
<sequence>MNKALLPLLLCCFIFPASGKDAGWQWYNEKINPKEKENKPVPAAPRQEPDIMQKLAALQTATKRALYEAILYPGVDNFVKYFRLQNYWAQQAGLFTMSARKAMLAHPELDYNLQYSHYNGTVRNQLAADQAQQRQAIAKLAEHYGIMFFYRGQDPIDGQLAQVINGFRDTYGLSVIPVSVDGVINPLLPDSRTDQGQAQRLGVKYFPAMMLVDPKQGSVRPLSYGFISQDDLAKQFLNVSEDFKPNF</sequence>
<accession>P14497</accession>
<name>TRAF_ECOLI</name>
<keyword id="KW-0184">Conjugation</keyword>
<keyword id="KW-0574">Periplasm</keyword>
<keyword id="KW-0614">Plasmid</keyword>
<keyword id="KW-0732">Signal</keyword>
<proteinExistence type="inferred from homology"/>
<protein>
    <recommendedName>
        <fullName>Protein TraF</fullName>
    </recommendedName>
</protein>
<geneLocation type="plasmid">
    <name>F</name>
</geneLocation>
<reference key="1">
    <citation type="journal article" date="1988" name="J. Bacteriol.">
        <title>The product of the F plasmid transfer operon gene, traF, is a periplasmic protein.</title>
        <authorList>
            <person name="Wu J.H."/>
            <person name="Kathir P."/>
            <person name="Ippen-Ihler K."/>
        </authorList>
    </citation>
    <scope>NUCLEOTIDE SEQUENCE [GENOMIC DNA]</scope>
    <scope>SUBCELLULAR LOCATION</scope>
    <source>
        <strain>K12</strain>
    </source>
</reference>
<reference key="2">
    <citation type="journal article" date="1994" name="Microbiol. Rev.">
        <title>Analysis of the sequence and gene products of the transfer region of the F sex factor.</title>
        <authorList>
            <person name="Frost L.S."/>
            <person name="Ippen-Ihler K."/>
            <person name="Skurray R.A."/>
        </authorList>
    </citation>
    <scope>NUCLEOTIDE SEQUENCE [GENOMIC DNA]</scope>
</reference>
<reference key="3">
    <citation type="submission" date="2000-04" db="EMBL/GenBank/DDBJ databases">
        <title>Complete nucleotide sequence of the F plasmid: its implications for organization and diversification of plasmid genomes.</title>
        <authorList>
            <person name="Shimizu H."/>
            <person name="Saitoh Y."/>
            <person name="Suda Y."/>
            <person name="Uehara K."/>
            <person name="Sampei G."/>
            <person name="Mizobuchi K."/>
        </authorList>
    </citation>
    <scope>NUCLEOTIDE SEQUENCE [LARGE SCALE GENOMIC DNA]</scope>
    <source>
        <strain>K12 / CR63</strain>
    </source>
</reference>
<reference key="4">
    <citation type="journal article" date="1992" name="J. Mol. Biol.">
        <title>Characterization of the F plasmid mating aggregation gene traN and of a new F transfer region locus trbE.</title>
        <authorList>
            <person name="Maneewannakul S."/>
            <person name="Kathir P."/>
            <person name="Ippen-Ihler K."/>
        </authorList>
    </citation>
    <scope>NUCLEOTIDE SEQUENCE [GENOMIC DNA] OF 1-22</scope>
    <scope>SUBCELLULAR LOCATION</scope>
    <source>
        <strain>K12</strain>
        <plasmid>F</plasmid>
    </source>
</reference>
<comment type="function">
    <text>Involved in F pilus assembly.</text>
</comment>
<comment type="subcellular location">
    <subcellularLocation>
        <location evidence="2 4">Periplasm</location>
    </subcellularLocation>
</comment>
<comment type="sequence caution" evidence="3">
    <conflict type="erroneous initiation">
        <sequence resource="EMBL-CDS" id="BAA97961"/>
    </conflict>
    <text>Extended N-terminus.</text>
</comment>
<gene>
    <name type="primary">traF</name>
    <name type="ordered locus">ECOK12F091</name>
</gene>
<evidence type="ECO:0000255" key="1"/>
<evidence type="ECO:0000269" key="2">
    <source>
    </source>
</evidence>
<evidence type="ECO:0000305" key="3"/>
<evidence type="ECO:0000305" key="4">
    <source>
    </source>
</evidence>
<dbReference type="EMBL" id="M20787">
    <property type="protein sequence ID" value="AAC63064.1"/>
    <property type="molecule type" value="Genomic_DNA"/>
</dbReference>
<dbReference type="EMBL" id="U01159">
    <property type="protein sequence ID" value="AAC44183.1"/>
    <property type="molecule type" value="Genomic_DNA"/>
</dbReference>
<dbReference type="EMBL" id="AP001918">
    <property type="protein sequence ID" value="BAA97961.1"/>
    <property type="status" value="ALT_INIT"/>
    <property type="molecule type" value="Genomic_DNA"/>
</dbReference>
<dbReference type="EMBL" id="X61575">
    <property type="protein sequence ID" value="CAA43777.1"/>
    <property type="molecule type" value="Genomic_DNA"/>
</dbReference>
<dbReference type="PIR" id="A31099">
    <property type="entry name" value="QUECTF"/>
</dbReference>
<dbReference type="RefSeq" id="NP_061470.1">
    <property type="nucleotide sequence ID" value="NC_002483.1"/>
</dbReference>
<dbReference type="RefSeq" id="WP_001030367.1">
    <property type="nucleotide sequence ID" value="NZ_JACEFS010000047.1"/>
</dbReference>
<dbReference type="RefSeq" id="YP_009060141.1">
    <property type="nucleotide sequence ID" value="NC_024956.1"/>
</dbReference>
<dbReference type="RefSeq" id="YP_009068333.1">
    <property type="nucleotide sequence ID" value="NC_025139.1"/>
</dbReference>
<dbReference type="RefSeq" id="YP_009070598.1">
    <property type="nucleotide sequence ID" value="NC_025175.1"/>
</dbReference>
<dbReference type="SMR" id="P14497"/>
<dbReference type="DIP" id="DIP-28100N"/>
<dbReference type="KEGG" id="ecoc:C3026_24555"/>
<dbReference type="PATRIC" id="fig|83333.107.peg.621"/>
<dbReference type="OrthoDB" id="5651797at2"/>
<dbReference type="PRO" id="PR:P14497"/>
<dbReference type="GO" id="GO:0042597">
    <property type="term" value="C:periplasmic space"/>
    <property type="evidence" value="ECO:0007669"/>
    <property type="project" value="UniProtKB-SubCell"/>
</dbReference>
<dbReference type="InterPro" id="IPR014110">
    <property type="entry name" value="TraF"/>
</dbReference>
<dbReference type="InterPro" id="IPR039555">
    <property type="entry name" value="TraF/TrbB"/>
</dbReference>
<dbReference type="NCBIfam" id="NF010257">
    <property type="entry name" value="PRK13703.1"/>
    <property type="match status" value="1"/>
</dbReference>
<dbReference type="NCBIfam" id="TIGR02739">
    <property type="entry name" value="TraF"/>
    <property type="match status" value="1"/>
</dbReference>
<dbReference type="Pfam" id="PF13728">
    <property type="entry name" value="TraF"/>
    <property type="match status" value="1"/>
</dbReference>
<organism>
    <name type="scientific">Escherichia coli (strain K12)</name>
    <dbReference type="NCBI Taxonomy" id="83333"/>
    <lineage>
        <taxon>Bacteria</taxon>
        <taxon>Pseudomonadati</taxon>
        <taxon>Pseudomonadota</taxon>
        <taxon>Gammaproteobacteria</taxon>
        <taxon>Enterobacterales</taxon>
        <taxon>Enterobacteriaceae</taxon>
        <taxon>Escherichia</taxon>
    </lineage>
</organism>